<dbReference type="EC" id="2.1.1.178" evidence="1"/>
<dbReference type="EMBL" id="BX950851">
    <property type="protein sequence ID" value="CAG75365.1"/>
    <property type="molecule type" value="Genomic_DNA"/>
</dbReference>
<dbReference type="RefSeq" id="WP_011094014.1">
    <property type="nucleotide sequence ID" value="NC_004547.2"/>
</dbReference>
<dbReference type="SMR" id="Q6D4C8"/>
<dbReference type="STRING" id="218491.ECA2464"/>
<dbReference type="GeneID" id="57208824"/>
<dbReference type="KEGG" id="eca:ECA2464"/>
<dbReference type="PATRIC" id="fig|218491.5.peg.2493"/>
<dbReference type="eggNOG" id="COG0144">
    <property type="taxonomic scope" value="Bacteria"/>
</dbReference>
<dbReference type="eggNOG" id="COG3270">
    <property type="taxonomic scope" value="Bacteria"/>
</dbReference>
<dbReference type="HOGENOM" id="CLU_005316_6_2_6"/>
<dbReference type="OrthoDB" id="9810297at2"/>
<dbReference type="Proteomes" id="UP000007966">
    <property type="component" value="Chromosome"/>
</dbReference>
<dbReference type="GO" id="GO:0005737">
    <property type="term" value="C:cytoplasm"/>
    <property type="evidence" value="ECO:0007669"/>
    <property type="project" value="UniProtKB-SubCell"/>
</dbReference>
<dbReference type="GO" id="GO:0003723">
    <property type="term" value="F:RNA binding"/>
    <property type="evidence" value="ECO:0007669"/>
    <property type="project" value="UniProtKB-KW"/>
</dbReference>
<dbReference type="GO" id="GO:0009383">
    <property type="term" value="F:rRNA (cytosine-C5-)-methyltransferase activity"/>
    <property type="evidence" value="ECO:0007669"/>
    <property type="project" value="TreeGrafter"/>
</dbReference>
<dbReference type="GO" id="GO:0070475">
    <property type="term" value="P:rRNA base methylation"/>
    <property type="evidence" value="ECO:0007669"/>
    <property type="project" value="TreeGrafter"/>
</dbReference>
<dbReference type="CDD" id="cd02440">
    <property type="entry name" value="AdoMet_MTases"/>
    <property type="match status" value="1"/>
</dbReference>
<dbReference type="Gene3D" id="3.10.450.720">
    <property type="match status" value="1"/>
</dbReference>
<dbReference type="Gene3D" id="3.40.50.150">
    <property type="entry name" value="Vaccinia Virus protein VP39"/>
    <property type="match status" value="1"/>
</dbReference>
<dbReference type="HAMAP" id="MF_01579">
    <property type="entry name" value="16SrRNA_methyltr_F"/>
    <property type="match status" value="1"/>
</dbReference>
<dbReference type="InterPro" id="IPR031341">
    <property type="entry name" value="Methyltr_RsmF_N"/>
</dbReference>
<dbReference type="InterPro" id="IPR049560">
    <property type="entry name" value="MeTrfase_RsmB-F_NOP2_cat"/>
</dbReference>
<dbReference type="InterPro" id="IPR001678">
    <property type="entry name" value="MeTrfase_RsmB-F_NOP2_dom"/>
</dbReference>
<dbReference type="InterPro" id="IPR027391">
    <property type="entry name" value="Nol1_Nop2_Fmu_2"/>
</dbReference>
<dbReference type="InterPro" id="IPR011023">
    <property type="entry name" value="Nop2p"/>
</dbReference>
<dbReference type="InterPro" id="IPR023267">
    <property type="entry name" value="RCMT"/>
</dbReference>
<dbReference type="InterPro" id="IPR023545">
    <property type="entry name" value="rRNA_ssu_MeTfrase_F"/>
</dbReference>
<dbReference type="InterPro" id="IPR018314">
    <property type="entry name" value="RsmB/NOL1/NOP2-like_CS"/>
</dbReference>
<dbReference type="InterPro" id="IPR029063">
    <property type="entry name" value="SAM-dependent_MTases_sf"/>
</dbReference>
<dbReference type="InterPro" id="IPR048457">
    <property type="entry name" value="YebU_pre-PUA_dom"/>
</dbReference>
<dbReference type="NCBIfam" id="TIGR00446">
    <property type="entry name" value="nop2p"/>
    <property type="match status" value="1"/>
</dbReference>
<dbReference type="NCBIfam" id="NF008898">
    <property type="entry name" value="PRK11933.1"/>
    <property type="match status" value="1"/>
</dbReference>
<dbReference type="PANTHER" id="PTHR22807:SF30">
    <property type="entry name" value="28S RRNA (CYTOSINE(4447)-C(5))-METHYLTRANSFERASE-RELATED"/>
    <property type="match status" value="1"/>
</dbReference>
<dbReference type="PANTHER" id="PTHR22807">
    <property type="entry name" value="NOP2 YEAST -RELATED NOL1/NOP2/FMU SUN DOMAIN-CONTAINING"/>
    <property type="match status" value="1"/>
</dbReference>
<dbReference type="Pfam" id="PF01189">
    <property type="entry name" value="Methyltr_RsmB-F"/>
    <property type="match status" value="1"/>
</dbReference>
<dbReference type="Pfam" id="PF17125">
    <property type="entry name" value="Methyltr_RsmF_N"/>
    <property type="match status" value="1"/>
</dbReference>
<dbReference type="Pfam" id="PF13636">
    <property type="entry name" value="Methyltranf_PUA"/>
    <property type="match status" value="1"/>
</dbReference>
<dbReference type="Pfam" id="PF21150">
    <property type="entry name" value="YebU_pre-PUA_dom"/>
    <property type="match status" value="1"/>
</dbReference>
<dbReference type="PRINTS" id="PR02008">
    <property type="entry name" value="RCMTFAMILY"/>
</dbReference>
<dbReference type="SUPFAM" id="SSF53335">
    <property type="entry name" value="S-adenosyl-L-methionine-dependent methyltransferases"/>
    <property type="match status" value="1"/>
</dbReference>
<dbReference type="PROSITE" id="PS01153">
    <property type="entry name" value="NOL1_NOP2_SUN"/>
    <property type="match status" value="1"/>
</dbReference>
<dbReference type="PROSITE" id="PS51686">
    <property type="entry name" value="SAM_MT_RSMB_NOP"/>
    <property type="match status" value="1"/>
</dbReference>
<protein>
    <recommendedName>
        <fullName evidence="1">Ribosomal RNA small subunit methyltransferase F</fullName>
        <ecNumber evidence="1">2.1.1.178</ecNumber>
    </recommendedName>
    <alternativeName>
        <fullName evidence="1">16S rRNA m5C1407 methyltransferase</fullName>
    </alternativeName>
    <alternativeName>
        <fullName evidence="1">rRNA (cytosine-C(5)-)-methyltransferase RsmF</fullName>
    </alternativeName>
</protein>
<name>RSMF_PECAS</name>
<evidence type="ECO:0000255" key="1">
    <source>
        <dbReference type="HAMAP-Rule" id="MF_01579"/>
    </source>
</evidence>
<keyword id="KW-0963">Cytoplasm</keyword>
<keyword id="KW-0489">Methyltransferase</keyword>
<keyword id="KW-1185">Reference proteome</keyword>
<keyword id="KW-0694">RNA-binding</keyword>
<keyword id="KW-0698">rRNA processing</keyword>
<keyword id="KW-0949">S-adenosyl-L-methionine</keyword>
<keyword id="KW-0808">Transferase</keyword>
<organism>
    <name type="scientific">Pectobacterium atrosepticum (strain SCRI 1043 / ATCC BAA-672)</name>
    <name type="common">Erwinia carotovora subsp. atroseptica</name>
    <dbReference type="NCBI Taxonomy" id="218491"/>
    <lineage>
        <taxon>Bacteria</taxon>
        <taxon>Pseudomonadati</taxon>
        <taxon>Pseudomonadota</taxon>
        <taxon>Gammaproteobacteria</taxon>
        <taxon>Enterobacterales</taxon>
        <taxon>Pectobacteriaceae</taxon>
        <taxon>Pectobacterium</taxon>
    </lineage>
</organism>
<feature type="chain" id="PRO_0000284996" description="Ribosomal RNA small subunit methyltransferase F">
    <location>
        <begin position="1"/>
        <end position="484"/>
    </location>
</feature>
<feature type="active site" description="Nucleophile" evidence="1">
    <location>
        <position position="248"/>
    </location>
</feature>
<feature type="binding site" evidence="1">
    <location>
        <begin position="126"/>
        <end position="132"/>
    </location>
    <ligand>
        <name>S-adenosyl-L-methionine</name>
        <dbReference type="ChEBI" id="CHEBI:59789"/>
    </ligand>
</feature>
<feature type="binding site" evidence="1">
    <location>
        <position position="150"/>
    </location>
    <ligand>
        <name>S-adenosyl-L-methionine</name>
        <dbReference type="ChEBI" id="CHEBI:59789"/>
    </ligand>
</feature>
<feature type="binding site" evidence="1">
    <location>
        <position position="177"/>
    </location>
    <ligand>
        <name>S-adenosyl-L-methionine</name>
        <dbReference type="ChEBI" id="CHEBI:59789"/>
    </ligand>
</feature>
<feature type="binding site" evidence="1">
    <location>
        <position position="195"/>
    </location>
    <ligand>
        <name>S-adenosyl-L-methionine</name>
        <dbReference type="ChEBI" id="CHEBI:59789"/>
    </ligand>
</feature>
<reference key="1">
    <citation type="journal article" date="2004" name="Proc. Natl. Acad. Sci. U.S.A.">
        <title>Genome sequence of the enterobacterial phytopathogen Erwinia carotovora subsp. atroseptica and characterization of virulence factors.</title>
        <authorList>
            <person name="Bell K.S."/>
            <person name="Sebaihia M."/>
            <person name="Pritchard L."/>
            <person name="Holden M.T.G."/>
            <person name="Hyman L.J."/>
            <person name="Holeva M.C."/>
            <person name="Thomson N.R."/>
            <person name="Bentley S.D."/>
            <person name="Churcher L.J.C."/>
            <person name="Mungall K."/>
            <person name="Atkin R."/>
            <person name="Bason N."/>
            <person name="Brooks K."/>
            <person name="Chillingworth T."/>
            <person name="Clark K."/>
            <person name="Doggett J."/>
            <person name="Fraser A."/>
            <person name="Hance Z."/>
            <person name="Hauser H."/>
            <person name="Jagels K."/>
            <person name="Moule S."/>
            <person name="Norbertczak H."/>
            <person name="Ormond D."/>
            <person name="Price C."/>
            <person name="Quail M.A."/>
            <person name="Sanders M."/>
            <person name="Walker D."/>
            <person name="Whitehead S."/>
            <person name="Salmond G.P.C."/>
            <person name="Birch P.R.J."/>
            <person name="Parkhill J."/>
            <person name="Toth I.K."/>
        </authorList>
    </citation>
    <scope>NUCLEOTIDE SEQUENCE [LARGE SCALE GENOMIC DNA]</scope>
    <source>
        <strain>SCRI 1043 / ATCC BAA-672</strain>
    </source>
</reference>
<gene>
    <name evidence="1" type="primary">rsmF</name>
    <name type="ordered locus">ECA2464</name>
</gene>
<sequence length="484" mass="53741">MAKFTPASLPAEFLDTMRDIMPSSLSMEDFIAACQRPLRRSIRVNTLKISVDAFLQLAQPYGWQLEPIPWCQEGFWLLNAEEENTRLGNTLEHLSGLFYIQEASSMLPASALFHHNDAPGTILDVAAAPGSKTTQIAARLNNEGAIVANEYSASRVKVLHANISRCGVSNTAITHFDGRVFGAALPEYFDAILLDAPCSGEGVVRKDPAAMSHWSQESITDIAATQRDLILSAFHALKPGGVMIYSTCTLNRQENQQVCRWLQAQFPDACEFESLDDLFAGAERATTEEGFLHVFPQIYDSEGFFVARLRKTGSVPPLPRPGYKVGKFPFSPVAHKDRALLTEAARKQGIRWDEELLQLWQRDSEVWLFPAALTSAFGNIKFSRIGIKLAERFPKGFRWQHEAIVALADPNASNAYALNDRIACEWFQGKDSYPEPLPTADELILTYQNTPVGLAKRISSRIKNSLPRDLVRDGASSARPLAKE</sequence>
<proteinExistence type="inferred from homology"/>
<accession>Q6D4C8</accession>
<comment type="function">
    <text evidence="1">Specifically methylates the cytosine at position 1407 (m5C1407) of 16S rRNA.</text>
</comment>
<comment type="catalytic activity">
    <reaction evidence="1">
        <text>cytidine(1407) in 16S rRNA + S-adenosyl-L-methionine = 5-methylcytidine(1407) in 16S rRNA + S-adenosyl-L-homocysteine + H(+)</text>
        <dbReference type="Rhea" id="RHEA:42756"/>
        <dbReference type="Rhea" id="RHEA-COMP:10223"/>
        <dbReference type="Rhea" id="RHEA-COMP:10224"/>
        <dbReference type="ChEBI" id="CHEBI:15378"/>
        <dbReference type="ChEBI" id="CHEBI:57856"/>
        <dbReference type="ChEBI" id="CHEBI:59789"/>
        <dbReference type="ChEBI" id="CHEBI:74483"/>
        <dbReference type="ChEBI" id="CHEBI:82748"/>
        <dbReference type="EC" id="2.1.1.178"/>
    </reaction>
</comment>
<comment type="subcellular location">
    <subcellularLocation>
        <location evidence="1">Cytoplasm</location>
    </subcellularLocation>
</comment>
<comment type="similarity">
    <text evidence="1">Belongs to the class I-like SAM-binding methyltransferase superfamily. RsmB/NOP family.</text>
</comment>